<proteinExistence type="inferred from homology"/>
<comment type="function">
    <text evidence="1">Produces ATP from ADP in the presence of a proton gradient across the membrane. The catalytic sites are hosted primarily by the beta subunits.</text>
</comment>
<comment type="catalytic activity">
    <reaction evidence="1">
        <text>ATP + H2O + 4 H(+)(in) = ADP + phosphate + 5 H(+)(out)</text>
        <dbReference type="Rhea" id="RHEA:57720"/>
        <dbReference type="ChEBI" id="CHEBI:15377"/>
        <dbReference type="ChEBI" id="CHEBI:15378"/>
        <dbReference type="ChEBI" id="CHEBI:30616"/>
        <dbReference type="ChEBI" id="CHEBI:43474"/>
        <dbReference type="ChEBI" id="CHEBI:456216"/>
        <dbReference type="EC" id="7.1.2.2"/>
    </reaction>
</comment>
<comment type="subunit">
    <text evidence="1">F-type ATPases have 2 components, CF(1) - the catalytic core - and CF(0) - the membrane proton channel. CF(1) has five subunits: alpha(3), beta(3), gamma(1), delta(1), epsilon(1). CF(0) has four main subunits: a(1), b(1), b'(1) and c(9-12).</text>
</comment>
<comment type="subcellular location">
    <subcellularLocation>
        <location evidence="1">Cell inner membrane</location>
        <topology evidence="1">Peripheral membrane protein</topology>
    </subcellularLocation>
</comment>
<comment type="similarity">
    <text evidence="1">Belongs to the ATPase alpha/beta chains family.</text>
</comment>
<evidence type="ECO:0000255" key="1">
    <source>
        <dbReference type="HAMAP-Rule" id="MF_01347"/>
    </source>
</evidence>
<accession>Q3AP13</accession>
<sequence length="462" mass="50242">MQEGKISQIIGPVVDVDFPEGRLPSILDALTVKREDGSKLVLETQQHLGEERVRTVAMESTDGLVRGMGVVNTGAAIQVPVGAEVLGRMLNVVGDPIDGRGPVNSKKTYSIHRSAPKFEDISTKAEMFETGIKVIDLLEPYSRGGKTGLFGGAGVGKTVLIMELINNIAKQQSGFSVFAGVGERTREGNDLWHEMMESGVIDKTALVFGQMNEPPGARQRVALTGLSIAEYFRDEENRDVLLFVDNIFRFTQAGSEVSALLGRMPSAVGYQPTLATEMGQLQDRIVSTKKGSVTSVQAIYVPADDLTDPAPATAFTHLDATTVLSRSIAELGIYPAVDPLDSTSRILDPNVVGDDHYNTAQAVKQLLQRYKDLQDIIAILGMDELSDEDKLVVSRARKVQRFLSQPFFVAEAFTGLAGKYVKLEDTIKGFKEIIAGKHDKLPENAFYLVGTIEEAIEKAKTL</sequence>
<gene>
    <name evidence="1" type="primary">atpD</name>
    <name type="ordered locus">Cag_2014</name>
</gene>
<protein>
    <recommendedName>
        <fullName evidence="1">ATP synthase subunit beta</fullName>
        <ecNumber evidence="1">7.1.2.2</ecNumber>
    </recommendedName>
    <alternativeName>
        <fullName evidence="1">ATP synthase F1 sector subunit beta</fullName>
    </alternativeName>
    <alternativeName>
        <fullName evidence="1">F-ATPase subunit beta</fullName>
    </alternativeName>
</protein>
<feature type="chain" id="PRO_0000254240" description="ATP synthase subunit beta">
    <location>
        <begin position="1"/>
        <end position="462"/>
    </location>
</feature>
<feature type="binding site" evidence="1">
    <location>
        <begin position="151"/>
        <end position="158"/>
    </location>
    <ligand>
        <name>ATP</name>
        <dbReference type="ChEBI" id="CHEBI:30616"/>
    </ligand>
</feature>
<keyword id="KW-0066">ATP synthesis</keyword>
<keyword id="KW-0067">ATP-binding</keyword>
<keyword id="KW-0997">Cell inner membrane</keyword>
<keyword id="KW-1003">Cell membrane</keyword>
<keyword id="KW-0139">CF(1)</keyword>
<keyword id="KW-0375">Hydrogen ion transport</keyword>
<keyword id="KW-0406">Ion transport</keyword>
<keyword id="KW-0472">Membrane</keyword>
<keyword id="KW-0547">Nucleotide-binding</keyword>
<keyword id="KW-1278">Translocase</keyword>
<keyword id="KW-0813">Transport</keyword>
<name>ATPB_CHLCH</name>
<organism>
    <name type="scientific">Chlorobium chlorochromatii (strain CaD3)</name>
    <dbReference type="NCBI Taxonomy" id="340177"/>
    <lineage>
        <taxon>Bacteria</taxon>
        <taxon>Pseudomonadati</taxon>
        <taxon>Chlorobiota</taxon>
        <taxon>Chlorobiia</taxon>
        <taxon>Chlorobiales</taxon>
        <taxon>Chlorobiaceae</taxon>
        <taxon>Chlorobium/Pelodictyon group</taxon>
        <taxon>Chlorobium</taxon>
    </lineage>
</organism>
<dbReference type="EC" id="7.1.2.2" evidence="1"/>
<dbReference type="EMBL" id="CP000108">
    <property type="protein sequence ID" value="ABB29262.1"/>
    <property type="molecule type" value="Genomic_DNA"/>
</dbReference>
<dbReference type="SMR" id="Q3AP13"/>
<dbReference type="STRING" id="340177.Cag_2014"/>
<dbReference type="KEGG" id="cch:Cag_2014"/>
<dbReference type="eggNOG" id="COG0055">
    <property type="taxonomic scope" value="Bacteria"/>
</dbReference>
<dbReference type="HOGENOM" id="CLU_022398_0_2_10"/>
<dbReference type="OrthoDB" id="9801639at2"/>
<dbReference type="GO" id="GO:0005886">
    <property type="term" value="C:plasma membrane"/>
    <property type="evidence" value="ECO:0007669"/>
    <property type="project" value="UniProtKB-SubCell"/>
</dbReference>
<dbReference type="GO" id="GO:0045259">
    <property type="term" value="C:proton-transporting ATP synthase complex"/>
    <property type="evidence" value="ECO:0007669"/>
    <property type="project" value="UniProtKB-KW"/>
</dbReference>
<dbReference type="GO" id="GO:0005524">
    <property type="term" value="F:ATP binding"/>
    <property type="evidence" value="ECO:0007669"/>
    <property type="project" value="UniProtKB-UniRule"/>
</dbReference>
<dbReference type="GO" id="GO:0016887">
    <property type="term" value="F:ATP hydrolysis activity"/>
    <property type="evidence" value="ECO:0007669"/>
    <property type="project" value="InterPro"/>
</dbReference>
<dbReference type="GO" id="GO:0046933">
    <property type="term" value="F:proton-transporting ATP synthase activity, rotational mechanism"/>
    <property type="evidence" value="ECO:0007669"/>
    <property type="project" value="UniProtKB-UniRule"/>
</dbReference>
<dbReference type="CDD" id="cd18110">
    <property type="entry name" value="ATP-synt_F1_beta_C"/>
    <property type="match status" value="1"/>
</dbReference>
<dbReference type="CDD" id="cd18115">
    <property type="entry name" value="ATP-synt_F1_beta_N"/>
    <property type="match status" value="1"/>
</dbReference>
<dbReference type="CDD" id="cd01133">
    <property type="entry name" value="F1-ATPase_beta_CD"/>
    <property type="match status" value="1"/>
</dbReference>
<dbReference type="FunFam" id="1.10.1140.10:FF:000001">
    <property type="entry name" value="ATP synthase subunit beta"/>
    <property type="match status" value="1"/>
</dbReference>
<dbReference type="FunFam" id="2.40.10.170:FF:000005">
    <property type="entry name" value="ATP synthase subunit beta"/>
    <property type="match status" value="1"/>
</dbReference>
<dbReference type="FunFam" id="3.40.50.300:FF:000026">
    <property type="entry name" value="ATP synthase subunit beta"/>
    <property type="match status" value="1"/>
</dbReference>
<dbReference type="Gene3D" id="2.40.10.170">
    <property type="match status" value="1"/>
</dbReference>
<dbReference type="Gene3D" id="1.10.1140.10">
    <property type="entry name" value="Bovine Mitochondrial F1-atpase, Atp Synthase Beta Chain, Chain D, domain 3"/>
    <property type="match status" value="1"/>
</dbReference>
<dbReference type="Gene3D" id="3.40.50.300">
    <property type="entry name" value="P-loop containing nucleotide triphosphate hydrolases"/>
    <property type="match status" value="1"/>
</dbReference>
<dbReference type="HAMAP" id="MF_01347">
    <property type="entry name" value="ATP_synth_beta_bact"/>
    <property type="match status" value="1"/>
</dbReference>
<dbReference type="InterPro" id="IPR003593">
    <property type="entry name" value="AAA+_ATPase"/>
</dbReference>
<dbReference type="InterPro" id="IPR055190">
    <property type="entry name" value="ATP-synt_VA_C"/>
</dbReference>
<dbReference type="InterPro" id="IPR005722">
    <property type="entry name" value="ATP_synth_F1_bsu"/>
</dbReference>
<dbReference type="InterPro" id="IPR020003">
    <property type="entry name" value="ATPase_a/bsu_AS"/>
</dbReference>
<dbReference type="InterPro" id="IPR050053">
    <property type="entry name" value="ATPase_alpha/beta_chains"/>
</dbReference>
<dbReference type="InterPro" id="IPR004100">
    <property type="entry name" value="ATPase_F1/V1/A1_a/bsu_N"/>
</dbReference>
<dbReference type="InterPro" id="IPR036121">
    <property type="entry name" value="ATPase_F1/V1/A1_a/bsu_N_sf"/>
</dbReference>
<dbReference type="InterPro" id="IPR000194">
    <property type="entry name" value="ATPase_F1/V1/A1_a/bsu_nucl-bd"/>
</dbReference>
<dbReference type="InterPro" id="IPR024034">
    <property type="entry name" value="ATPase_F1/V1_b/a_C"/>
</dbReference>
<dbReference type="InterPro" id="IPR027417">
    <property type="entry name" value="P-loop_NTPase"/>
</dbReference>
<dbReference type="NCBIfam" id="TIGR01039">
    <property type="entry name" value="atpD"/>
    <property type="match status" value="1"/>
</dbReference>
<dbReference type="PANTHER" id="PTHR15184">
    <property type="entry name" value="ATP SYNTHASE"/>
    <property type="match status" value="1"/>
</dbReference>
<dbReference type="PANTHER" id="PTHR15184:SF71">
    <property type="entry name" value="ATP SYNTHASE SUBUNIT BETA, MITOCHONDRIAL"/>
    <property type="match status" value="1"/>
</dbReference>
<dbReference type="Pfam" id="PF00006">
    <property type="entry name" value="ATP-synt_ab"/>
    <property type="match status" value="1"/>
</dbReference>
<dbReference type="Pfam" id="PF02874">
    <property type="entry name" value="ATP-synt_ab_N"/>
    <property type="match status" value="1"/>
</dbReference>
<dbReference type="Pfam" id="PF22919">
    <property type="entry name" value="ATP-synt_VA_C"/>
    <property type="match status" value="1"/>
</dbReference>
<dbReference type="PIRSF" id="PIRSF039072">
    <property type="entry name" value="ATPase_subunit_beta"/>
    <property type="match status" value="1"/>
</dbReference>
<dbReference type="SMART" id="SM00382">
    <property type="entry name" value="AAA"/>
    <property type="match status" value="1"/>
</dbReference>
<dbReference type="SUPFAM" id="SSF47917">
    <property type="entry name" value="C-terminal domain of alpha and beta subunits of F1 ATP synthase"/>
    <property type="match status" value="1"/>
</dbReference>
<dbReference type="SUPFAM" id="SSF50615">
    <property type="entry name" value="N-terminal domain of alpha and beta subunits of F1 ATP synthase"/>
    <property type="match status" value="1"/>
</dbReference>
<dbReference type="SUPFAM" id="SSF52540">
    <property type="entry name" value="P-loop containing nucleoside triphosphate hydrolases"/>
    <property type="match status" value="1"/>
</dbReference>
<dbReference type="PROSITE" id="PS00152">
    <property type="entry name" value="ATPASE_ALPHA_BETA"/>
    <property type="match status" value="1"/>
</dbReference>
<reference key="1">
    <citation type="submission" date="2005-08" db="EMBL/GenBank/DDBJ databases">
        <title>Complete sequence of Chlorobium chlorochromatii CaD3.</title>
        <authorList>
            <consortium name="US DOE Joint Genome Institute"/>
            <person name="Copeland A."/>
            <person name="Lucas S."/>
            <person name="Lapidus A."/>
            <person name="Barry K."/>
            <person name="Detter J.C."/>
            <person name="Glavina T."/>
            <person name="Hammon N."/>
            <person name="Israni S."/>
            <person name="Pitluck S."/>
            <person name="Bryant D."/>
            <person name="Schmutz J."/>
            <person name="Larimer F."/>
            <person name="Land M."/>
            <person name="Kyrpides N."/>
            <person name="Ivanova N."/>
            <person name="Richardson P."/>
        </authorList>
    </citation>
    <scope>NUCLEOTIDE SEQUENCE [LARGE SCALE GENOMIC DNA]</scope>
    <source>
        <strain>CaD3</strain>
    </source>
</reference>